<proteinExistence type="inferred from homology"/>
<evidence type="ECO:0000255" key="1">
    <source>
        <dbReference type="HAMAP-Rule" id="MF_00272"/>
    </source>
</evidence>
<evidence type="ECO:0000255" key="2">
    <source>
        <dbReference type="PROSITE-ProRule" id="PRU01066"/>
    </source>
</evidence>
<dbReference type="EMBL" id="CP000133">
    <property type="protein sequence ID" value="ABC91022.1"/>
    <property type="molecule type" value="Genomic_DNA"/>
</dbReference>
<dbReference type="RefSeq" id="WP_011425503.1">
    <property type="nucleotide sequence ID" value="NC_007761.1"/>
</dbReference>
<dbReference type="SMR" id="Q2K814"/>
<dbReference type="KEGG" id="ret:RHE_CH02242"/>
<dbReference type="eggNOG" id="COG0509">
    <property type="taxonomic scope" value="Bacteria"/>
</dbReference>
<dbReference type="HOGENOM" id="CLU_097408_2_2_5"/>
<dbReference type="OrthoDB" id="9796712at2"/>
<dbReference type="Proteomes" id="UP000001936">
    <property type="component" value="Chromosome"/>
</dbReference>
<dbReference type="GO" id="GO:0005737">
    <property type="term" value="C:cytoplasm"/>
    <property type="evidence" value="ECO:0007669"/>
    <property type="project" value="TreeGrafter"/>
</dbReference>
<dbReference type="GO" id="GO:0005960">
    <property type="term" value="C:glycine cleavage complex"/>
    <property type="evidence" value="ECO:0007669"/>
    <property type="project" value="InterPro"/>
</dbReference>
<dbReference type="GO" id="GO:0019464">
    <property type="term" value="P:glycine decarboxylation via glycine cleavage system"/>
    <property type="evidence" value="ECO:0007669"/>
    <property type="project" value="UniProtKB-UniRule"/>
</dbReference>
<dbReference type="CDD" id="cd06848">
    <property type="entry name" value="GCS_H"/>
    <property type="match status" value="1"/>
</dbReference>
<dbReference type="Gene3D" id="2.40.50.100">
    <property type="match status" value="1"/>
</dbReference>
<dbReference type="HAMAP" id="MF_00272">
    <property type="entry name" value="GcvH"/>
    <property type="match status" value="1"/>
</dbReference>
<dbReference type="InterPro" id="IPR003016">
    <property type="entry name" value="2-oxoA_DH_lipoyl-BS"/>
</dbReference>
<dbReference type="InterPro" id="IPR000089">
    <property type="entry name" value="Biotin_lipoyl"/>
</dbReference>
<dbReference type="InterPro" id="IPR002930">
    <property type="entry name" value="GCV_H"/>
</dbReference>
<dbReference type="InterPro" id="IPR033753">
    <property type="entry name" value="GCV_H/Fam206"/>
</dbReference>
<dbReference type="InterPro" id="IPR017453">
    <property type="entry name" value="GCV_H_sub"/>
</dbReference>
<dbReference type="InterPro" id="IPR011053">
    <property type="entry name" value="Single_hybrid_motif"/>
</dbReference>
<dbReference type="NCBIfam" id="TIGR00527">
    <property type="entry name" value="gcvH"/>
    <property type="match status" value="1"/>
</dbReference>
<dbReference type="NCBIfam" id="NF002270">
    <property type="entry name" value="PRK01202.1"/>
    <property type="match status" value="1"/>
</dbReference>
<dbReference type="PANTHER" id="PTHR11715">
    <property type="entry name" value="GLYCINE CLEAVAGE SYSTEM H PROTEIN"/>
    <property type="match status" value="1"/>
</dbReference>
<dbReference type="PANTHER" id="PTHR11715:SF3">
    <property type="entry name" value="GLYCINE CLEAVAGE SYSTEM H PROTEIN-RELATED"/>
    <property type="match status" value="1"/>
</dbReference>
<dbReference type="Pfam" id="PF01597">
    <property type="entry name" value="GCV_H"/>
    <property type="match status" value="1"/>
</dbReference>
<dbReference type="SUPFAM" id="SSF51230">
    <property type="entry name" value="Single hybrid motif"/>
    <property type="match status" value="1"/>
</dbReference>
<dbReference type="PROSITE" id="PS50968">
    <property type="entry name" value="BIOTINYL_LIPOYL"/>
    <property type="match status" value="1"/>
</dbReference>
<dbReference type="PROSITE" id="PS00189">
    <property type="entry name" value="LIPOYL"/>
    <property type="match status" value="1"/>
</dbReference>
<comment type="function">
    <text evidence="1">The glycine cleavage system catalyzes the degradation of glycine. The H protein shuttles the methylamine group of glycine from the P protein to the T protein.</text>
</comment>
<comment type="cofactor">
    <cofactor evidence="1">
        <name>(R)-lipoate</name>
        <dbReference type="ChEBI" id="CHEBI:83088"/>
    </cofactor>
    <text evidence="1">Binds 1 lipoyl cofactor covalently.</text>
</comment>
<comment type="subunit">
    <text evidence="1">The glycine cleavage system is composed of four proteins: P, T, L and H.</text>
</comment>
<comment type="similarity">
    <text evidence="1">Belongs to the GcvH family.</text>
</comment>
<gene>
    <name evidence="1" type="primary">gcvH</name>
    <name type="ordered locus">RHE_CH02242</name>
</gene>
<accession>Q2K814</accession>
<organism>
    <name type="scientific">Rhizobium etli (strain ATCC 51251 / DSM 11541 / JCM 21823 / NBRC 15573 / CFN 42)</name>
    <dbReference type="NCBI Taxonomy" id="347834"/>
    <lineage>
        <taxon>Bacteria</taxon>
        <taxon>Pseudomonadati</taxon>
        <taxon>Pseudomonadota</taxon>
        <taxon>Alphaproteobacteria</taxon>
        <taxon>Hyphomicrobiales</taxon>
        <taxon>Rhizobiaceae</taxon>
        <taxon>Rhizobium/Agrobacterium group</taxon>
        <taxon>Rhizobium</taxon>
    </lineage>
</organism>
<sequence>MLKFTEEHEWLKIEGDVATVGITNYAVDQLGDLVFVELPEVGATFSKNGNAATVESVKAASDVYCPLDGEITEVNPAIVADPSLVNSDPQGAGWFFKLKLANPADADGLLDEAAYKELTA</sequence>
<feature type="chain" id="PRO_0000302424" description="Glycine cleavage system H protein">
    <location>
        <begin position="1"/>
        <end position="120"/>
    </location>
</feature>
<feature type="domain" description="Lipoyl-binding" evidence="2">
    <location>
        <begin position="17"/>
        <end position="99"/>
    </location>
</feature>
<feature type="modified residue" description="N6-lipoyllysine" evidence="1">
    <location>
        <position position="58"/>
    </location>
</feature>
<name>GCSH_RHIEC</name>
<protein>
    <recommendedName>
        <fullName evidence="1">Glycine cleavage system H protein</fullName>
    </recommendedName>
</protein>
<keyword id="KW-0450">Lipoyl</keyword>
<keyword id="KW-1185">Reference proteome</keyword>
<reference key="1">
    <citation type="journal article" date="2006" name="Proc. Natl. Acad. Sci. U.S.A.">
        <title>The partitioned Rhizobium etli genome: genetic and metabolic redundancy in seven interacting replicons.</title>
        <authorList>
            <person name="Gonzalez V."/>
            <person name="Santamaria R.I."/>
            <person name="Bustos P."/>
            <person name="Hernandez-Gonzalez I."/>
            <person name="Medrano-Soto A."/>
            <person name="Moreno-Hagelsieb G."/>
            <person name="Janga S.C."/>
            <person name="Ramirez M.A."/>
            <person name="Jimenez-Jacinto V."/>
            <person name="Collado-Vides J."/>
            <person name="Davila G."/>
        </authorList>
    </citation>
    <scope>NUCLEOTIDE SEQUENCE [LARGE SCALE GENOMIC DNA]</scope>
    <source>
        <strain>ATCC 51251 / DSM 11541 / JCM 21823 / NBRC 15573 / CFN 42</strain>
    </source>
</reference>